<protein>
    <recommendedName>
        <fullName>Uncharacterized protein Mb0509</fullName>
    </recommendedName>
</protein>
<reference key="1">
    <citation type="journal article" date="2003" name="Proc. Natl. Acad. Sci. U.S.A.">
        <title>The complete genome sequence of Mycobacterium bovis.</title>
        <authorList>
            <person name="Garnier T."/>
            <person name="Eiglmeier K."/>
            <person name="Camus J.-C."/>
            <person name="Medina N."/>
            <person name="Mansoor H."/>
            <person name="Pryor M."/>
            <person name="Duthoy S."/>
            <person name="Grondin S."/>
            <person name="Lacroix C."/>
            <person name="Monsempe C."/>
            <person name="Simon S."/>
            <person name="Harris B."/>
            <person name="Atkin R."/>
            <person name="Doggett J."/>
            <person name="Mayes R."/>
            <person name="Keating L."/>
            <person name="Wheeler P.R."/>
            <person name="Parkhill J."/>
            <person name="Barrell B.G."/>
            <person name="Cole S.T."/>
            <person name="Gordon S.V."/>
            <person name="Hewinson R.G."/>
        </authorList>
    </citation>
    <scope>NUCLEOTIDE SEQUENCE [LARGE SCALE GENOMIC DNA]</scope>
    <source>
        <strain>ATCC BAA-935 / AF2122/97</strain>
    </source>
</reference>
<reference key="2">
    <citation type="journal article" date="2017" name="Genome Announc.">
        <title>Updated reference genome sequence and annotation of Mycobacterium bovis AF2122/97.</title>
        <authorList>
            <person name="Malone K.M."/>
            <person name="Farrell D."/>
            <person name="Stuber T.P."/>
            <person name="Schubert O.T."/>
            <person name="Aebersold R."/>
            <person name="Robbe-Austerman S."/>
            <person name="Gordon S.V."/>
        </authorList>
    </citation>
    <scope>NUCLEOTIDE SEQUENCE [LARGE SCALE GENOMIC DNA]</scope>
    <scope>GENOME REANNOTATION</scope>
    <source>
        <strain>ATCC BAA-935 / AF2122/97</strain>
    </source>
</reference>
<feature type="signal peptide" evidence="1">
    <location>
        <begin position="1"/>
        <end position="21"/>
    </location>
</feature>
<feature type="chain" id="PRO_0000014077" description="Uncharacterized protein Mb0509">
    <location>
        <begin position="22"/>
        <end position="280"/>
    </location>
</feature>
<gene>
    <name type="ordered locus">BQ2027_MB0509</name>
</gene>
<dbReference type="EMBL" id="LT708304">
    <property type="protein sequence ID" value="SIT99104.1"/>
    <property type="molecule type" value="Genomic_DNA"/>
</dbReference>
<dbReference type="RefSeq" id="NP_854172.1">
    <property type="nucleotide sequence ID" value="NC_002945.3"/>
</dbReference>
<dbReference type="RefSeq" id="WP_003402432.1">
    <property type="nucleotide sequence ID" value="NC_002945.4"/>
</dbReference>
<dbReference type="SMR" id="P64718"/>
<dbReference type="PATRIC" id="fig|233413.5.peg.554"/>
<dbReference type="Proteomes" id="UP000001419">
    <property type="component" value="Chromosome"/>
</dbReference>
<dbReference type="Gene3D" id="3.20.20.150">
    <property type="entry name" value="Divalent-metal-dependent TIM barrel enzymes"/>
    <property type="match status" value="1"/>
</dbReference>
<dbReference type="InterPro" id="IPR050312">
    <property type="entry name" value="IolE/XylAMocC-like"/>
</dbReference>
<dbReference type="InterPro" id="IPR036237">
    <property type="entry name" value="Xyl_isomerase-like_sf"/>
</dbReference>
<dbReference type="InterPro" id="IPR013022">
    <property type="entry name" value="Xyl_isomerase-like_TIM-brl"/>
</dbReference>
<dbReference type="PANTHER" id="PTHR12110:SF47">
    <property type="match status" value="1"/>
</dbReference>
<dbReference type="PANTHER" id="PTHR12110">
    <property type="entry name" value="HYDROXYPYRUVATE ISOMERASE"/>
    <property type="match status" value="1"/>
</dbReference>
<dbReference type="Pfam" id="PF01261">
    <property type="entry name" value="AP_endonuc_2"/>
    <property type="match status" value="1"/>
</dbReference>
<dbReference type="SUPFAM" id="SSF51658">
    <property type="entry name" value="Xylose isomerase-like"/>
    <property type="match status" value="1"/>
</dbReference>
<keyword id="KW-1185">Reference proteome</keyword>
<keyword id="KW-0732">Signal</keyword>
<comment type="similarity">
    <text evidence="2">To M.leprae ML2432 and S.coelicolor SCO3347.</text>
</comment>
<organism>
    <name type="scientific">Mycobacterium bovis (strain ATCC BAA-935 / AF2122/97)</name>
    <dbReference type="NCBI Taxonomy" id="233413"/>
    <lineage>
        <taxon>Bacteria</taxon>
        <taxon>Bacillati</taxon>
        <taxon>Actinomycetota</taxon>
        <taxon>Actinomycetes</taxon>
        <taxon>Mycobacteriales</taxon>
        <taxon>Mycobacteriaceae</taxon>
        <taxon>Mycobacterium</taxon>
        <taxon>Mycobacterium tuberculosis complex</taxon>
    </lineage>
</organism>
<accession>P64718</accession>
<accession>A0A1R3XVM5</accession>
<accession>Q11163</accession>
<accession>X2BF84</accession>
<proteinExistence type="inferred from homology"/>
<evidence type="ECO:0000255" key="1"/>
<evidence type="ECO:0000305" key="2"/>
<sequence length="280" mass="30466">MRPAIKVGLSTASVYPLRAEAAFEYADRLGYDGVELMVWGESVSQDIDAVRKLSRRYRVPVLSVHAPCLLISQRVWGANPILKLDRSVRAAEQLGAQTVVVHPPFRWQRRYAEGFSDQVAALEAASTVMVAVENMFPFRADRFFGAGQSRERMRKRGGGPGPAISAFAPSYDPLDGNHAHYTLDLSHTATAGTDSLDMARRMGPGLVHLHLCDGSGLPADEHLVPGRGTQPTAEVCQMLAGSGFVGHVVLEVSTSSARSANERESMLAESLQFARTHLLR</sequence>
<name>Y509_MYCBO</name>